<sequence length="156" mass="17377">MHCPYCRHPDSRVVDSREAEEGAAIRRRRSCPNCGRRFTTVETAILSVVKRSGVTEPFSREKVIRGVRRACQGREVDDDALNLLAQQVEDAVRAKGSPEVPSHEVGLAILGPLRDLDEVAYLRFASVYRSFTSAEDFEREISEMRAARARAGATAD</sequence>
<evidence type="ECO:0000255" key="1">
    <source>
        <dbReference type="HAMAP-Rule" id="MF_00440"/>
    </source>
</evidence>
<dbReference type="EMBL" id="AP006618">
    <property type="protein sequence ID" value="BAD58646.1"/>
    <property type="molecule type" value="Genomic_DNA"/>
</dbReference>
<dbReference type="RefSeq" id="WP_011210331.1">
    <property type="nucleotide sequence ID" value="NC_006361.1"/>
</dbReference>
<dbReference type="SMR" id="Q5YT45"/>
<dbReference type="STRING" id="247156.NFA_37980"/>
<dbReference type="GeneID" id="61134490"/>
<dbReference type="KEGG" id="nfa:NFA_37980"/>
<dbReference type="eggNOG" id="COG1327">
    <property type="taxonomic scope" value="Bacteria"/>
</dbReference>
<dbReference type="HOGENOM" id="CLU_108412_1_0_11"/>
<dbReference type="OrthoDB" id="9807461at2"/>
<dbReference type="Proteomes" id="UP000006820">
    <property type="component" value="Chromosome"/>
</dbReference>
<dbReference type="GO" id="GO:0005524">
    <property type="term" value="F:ATP binding"/>
    <property type="evidence" value="ECO:0007669"/>
    <property type="project" value="UniProtKB-KW"/>
</dbReference>
<dbReference type="GO" id="GO:0003677">
    <property type="term" value="F:DNA binding"/>
    <property type="evidence" value="ECO:0007669"/>
    <property type="project" value="UniProtKB-KW"/>
</dbReference>
<dbReference type="GO" id="GO:0008270">
    <property type="term" value="F:zinc ion binding"/>
    <property type="evidence" value="ECO:0007669"/>
    <property type="project" value="UniProtKB-UniRule"/>
</dbReference>
<dbReference type="GO" id="GO:0045892">
    <property type="term" value="P:negative regulation of DNA-templated transcription"/>
    <property type="evidence" value="ECO:0007669"/>
    <property type="project" value="UniProtKB-UniRule"/>
</dbReference>
<dbReference type="HAMAP" id="MF_00440">
    <property type="entry name" value="NrdR"/>
    <property type="match status" value="1"/>
</dbReference>
<dbReference type="InterPro" id="IPR005144">
    <property type="entry name" value="ATP-cone_dom"/>
</dbReference>
<dbReference type="InterPro" id="IPR055173">
    <property type="entry name" value="NrdR-like_N"/>
</dbReference>
<dbReference type="InterPro" id="IPR003796">
    <property type="entry name" value="RNR_NrdR-like"/>
</dbReference>
<dbReference type="NCBIfam" id="TIGR00244">
    <property type="entry name" value="transcriptional regulator NrdR"/>
    <property type="match status" value="1"/>
</dbReference>
<dbReference type="PANTHER" id="PTHR30455">
    <property type="entry name" value="TRANSCRIPTIONAL REPRESSOR NRDR"/>
    <property type="match status" value="1"/>
</dbReference>
<dbReference type="PANTHER" id="PTHR30455:SF2">
    <property type="entry name" value="TRANSCRIPTIONAL REPRESSOR NRDR"/>
    <property type="match status" value="1"/>
</dbReference>
<dbReference type="Pfam" id="PF03477">
    <property type="entry name" value="ATP-cone"/>
    <property type="match status" value="1"/>
</dbReference>
<dbReference type="Pfam" id="PF22811">
    <property type="entry name" value="Zn_ribbon_NrdR"/>
    <property type="match status" value="1"/>
</dbReference>
<dbReference type="PROSITE" id="PS51161">
    <property type="entry name" value="ATP_CONE"/>
    <property type="match status" value="1"/>
</dbReference>
<accession>Q5YT45</accession>
<organism>
    <name type="scientific">Nocardia farcinica (strain IFM 10152)</name>
    <dbReference type="NCBI Taxonomy" id="247156"/>
    <lineage>
        <taxon>Bacteria</taxon>
        <taxon>Bacillati</taxon>
        <taxon>Actinomycetota</taxon>
        <taxon>Actinomycetes</taxon>
        <taxon>Mycobacteriales</taxon>
        <taxon>Nocardiaceae</taxon>
        <taxon>Nocardia</taxon>
    </lineage>
</organism>
<keyword id="KW-0067">ATP-binding</keyword>
<keyword id="KW-0238">DNA-binding</keyword>
<keyword id="KW-0479">Metal-binding</keyword>
<keyword id="KW-0547">Nucleotide-binding</keyword>
<keyword id="KW-1185">Reference proteome</keyword>
<keyword id="KW-0678">Repressor</keyword>
<keyword id="KW-0804">Transcription</keyword>
<keyword id="KW-0805">Transcription regulation</keyword>
<keyword id="KW-0862">Zinc</keyword>
<keyword id="KW-0863">Zinc-finger</keyword>
<name>NRDR_NOCFA</name>
<proteinExistence type="inferred from homology"/>
<feature type="chain" id="PRO_0000182325" description="Transcriptional repressor NrdR">
    <location>
        <begin position="1"/>
        <end position="156"/>
    </location>
</feature>
<feature type="domain" description="ATP-cone" evidence="1">
    <location>
        <begin position="46"/>
        <end position="136"/>
    </location>
</feature>
<feature type="zinc finger region" evidence="1">
    <location>
        <begin position="3"/>
        <end position="34"/>
    </location>
</feature>
<comment type="function">
    <text evidence="1">Negatively regulates transcription of bacterial ribonucleotide reductase nrd genes and operons by binding to NrdR-boxes.</text>
</comment>
<comment type="cofactor">
    <cofactor evidence="1">
        <name>Zn(2+)</name>
        <dbReference type="ChEBI" id="CHEBI:29105"/>
    </cofactor>
    <text evidence="1">Binds 1 zinc ion.</text>
</comment>
<comment type="similarity">
    <text evidence="1">Belongs to the NrdR family.</text>
</comment>
<gene>
    <name evidence="1" type="primary">nrdR</name>
    <name type="ordered locus">NFA_37980</name>
</gene>
<reference key="1">
    <citation type="journal article" date="2004" name="Proc. Natl. Acad. Sci. U.S.A.">
        <title>The complete genomic sequence of Nocardia farcinica IFM 10152.</title>
        <authorList>
            <person name="Ishikawa J."/>
            <person name="Yamashita A."/>
            <person name="Mikami Y."/>
            <person name="Hoshino Y."/>
            <person name="Kurita H."/>
            <person name="Hotta K."/>
            <person name="Shiba T."/>
            <person name="Hattori M."/>
        </authorList>
    </citation>
    <scope>NUCLEOTIDE SEQUENCE [LARGE SCALE GENOMIC DNA]</scope>
    <source>
        <strain>IFM 10152</strain>
    </source>
</reference>
<protein>
    <recommendedName>
        <fullName evidence="1">Transcriptional repressor NrdR</fullName>
    </recommendedName>
</protein>